<name>CCAMK_MEDTR</name>
<feature type="chain" id="PRO_0000085699" description="Calcium and calcium/calmodulin-dependent serine/threonine-protein kinase DMI-3">
    <location>
        <begin position="1"/>
        <end position="523"/>
    </location>
</feature>
<feature type="domain" description="Protein kinase" evidence="4">
    <location>
        <begin position="12"/>
        <end position="306"/>
    </location>
</feature>
<feature type="domain" description="EF-hand 1" evidence="5">
    <location>
        <begin position="400"/>
        <end position="435"/>
    </location>
</feature>
<feature type="domain" description="EF-hand 2" evidence="5">
    <location>
        <begin position="436"/>
        <end position="471"/>
    </location>
</feature>
<feature type="domain" description="EF-hand 3" evidence="5">
    <location>
        <begin position="478"/>
        <end position="513"/>
    </location>
</feature>
<feature type="region of interest" description="Calmodulin-binding" evidence="3">
    <location>
        <begin position="329"/>
        <end position="342"/>
    </location>
</feature>
<feature type="active site" description="Proton acceptor" evidence="4">
    <location>
        <position position="171"/>
    </location>
</feature>
<feature type="binding site" evidence="4">
    <location>
        <begin position="18"/>
        <end position="26"/>
    </location>
    <ligand>
        <name>ATP</name>
        <dbReference type="ChEBI" id="CHEBI:30616"/>
    </ligand>
</feature>
<feature type="binding site" evidence="4">
    <location>
        <position position="47"/>
    </location>
    <ligand>
        <name>ATP</name>
        <dbReference type="ChEBI" id="CHEBI:30616"/>
    </ligand>
</feature>
<feature type="binding site" evidence="5">
    <location>
        <position position="413"/>
    </location>
    <ligand>
        <name>Ca(2+)</name>
        <dbReference type="ChEBI" id="CHEBI:29108"/>
        <label>1</label>
    </ligand>
</feature>
<feature type="binding site" evidence="5">
    <location>
        <position position="415"/>
    </location>
    <ligand>
        <name>Ca(2+)</name>
        <dbReference type="ChEBI" id="CHEBI:29108"/>
        <label>1</label>
    </ligand>
</feature>
<feature type="binding site" evidence="5">
    <location>
        <position position="417"/>
    </location>
    <ligand>
        <name>Ca(2+)</name>
        <dbReference type="ChEBI" id="CHEBI:29108"/>
        <label>1</label>
    </ligand>
</feature>
<feature type="binding site" evidence="5">
    <location>
        <position position="419"/>
    </location>
    <ligand>
        <name>Ca(2+)</name>
        <dbReference type="ChEBI" id="CHEBI:29108"/>
        <label>1</label>
    </ligand>
</feature>
<feature type="binding site" evidence="5">
    <location>
        <position position="424"/>
    </location>
    <ligand>
        <name>Ca(2+)</name>
        <dbReference type="ChEBI" id="CHEBI:29108"/>
        <label>1</label>
    </ligand>
</feature>
<feature type="binding site" evidence="5">
    <location>
        <position position="449"/>
    </location>
    <ligand>
        <name>Ca(2+)</name>
        <dbReference type="ChEBI" id="CHEBI:29108"/>
        <label>2</label>
    </ligand>
</feature>
<feature type="binding site" evidence="5">
    <location>
        <position position="451"/>
    </location>
    <ligand>
        <name>Ca(2+)</name>
        <dbReference type="ChEBI" id="CHEBI:29108"/>
        <label>2</label>
    </ligand>
</feature>
<feature type="binding site" evidence="5">
    <location>
        <position position="453"/>
    </location>
    <ligand>
        <name>Ca(2+)</name>
        <dbReference type="ChEBI" id="CHEBI:29108"/>
        <label>2</label>
    </ligand>
</feature>
<feature type="binding site" evidence="5">
    <location>
        <position position="455"/>
    </location>
    <ligand>
        <name>Ca(2+)</name>
        <dbReference type="ChEBI" id="CHEBI:29108"/>
        <label>2</label>
    </ligand>
</feature>
<feature type="binding site" evidence="5">
    <location>
        <position position="460"/>
    </location>
    <ligand>
        <name>Ca(2+)</name>
        <dbReference type="ChEBI" id="CHEBI:29108"/>
        <label>2</label>
    </ligand>
</feature>
<feature type="binding site" evidence="5">
    <location>
        <position position="491"/>
    </location>
    <ligand>
        <name>Ca(2+)</name>
        <dbReference type="ChEBI" id="CHEBI:29108"/>
        <label>3</label>
    </ligand>
</feature>
<feature type="binding site" evidence="5">
    <location>
        <position position="493"/>
    </location>
    <ligand>
        <name>Ca(2+)</name>
        <dbReference type="ChEBI" id="CHEBI:29108"/>
        <label>3</label>
    </ligand>
</feature>
<feature type="binding site" evidence="5">
    <location>
        <position position="495"/>
    </location>
    <ligand>
        <name>Ca(2+)</name>
        <dbReference type="ChEBI" id="CHEBI:29108"/>
        <label>3</label>
    </ligand>
</feature>
<feature type="binding site" evidence="5">
    <location>
        <position position="497"/>
    </location>
    <ligand>
        <name>Ca(2+)</name>
        <dbReference type="ChEBI" id="CHEBI:29108"/>
        <label>3</label>
    </ligand>
</feature>
<feature type="binding site" evidence="5">
    <location>
        <position position="502"/>
    </location>
    <ligand>
        <name>Ca(2+)</name>
        <dbReference type="ChEBI" id="CHEBI:29108"/>
        <label>3</label>
    </ligand>
</feature>
<feature type="modified residue" description="Phosphothreonine" evidence="2">
    <location>
        <position position="271"/>
    </location>
</feature>
<sequence length="523" mass="58637">MGYGTRKLSDEYEVSEILGRGGFSVVRKGTKKSSIEEEKSQSQVAIKTLRRLGASNNPSGLPRKKDIGEKSTIGFPTMRQVSVSDTLLTNEILVMRRIVENVSPHPNVIDLYDVYEDTNGVHLVLELCSGGELFDRIVAQDKYSETEAATVVHQIASGLEAVHRANIVHRDLKPENCLFLDVRKDSPLKIMDFGLSSVEEFTDPVVGLFGSIDYVSPEALSQGKITTKSDMWSLGVILYILLSGYPPFIAQNNRQKQQMIMNGNFSFYEKTWKGISQPAKNLISSLLTVDPSKRPSALELLSDPWVKGEKAKDVQMDPEIVSRLQSFNARRKLRAAAIASVWSSTIFLRTKKLKSLVGSYDLKEEEIENLRMHFKKICADRDNATLSEFEEVLKAMNMLSLIPFASRIFDLFDNNRDGTVDMREILCGFSSLKNSKGEDALRLCFQMYDTDRSGCISKEEVASMLRALPYDCLPTDITEPGKLDEIFDLMDANNDGKVTFDEFKAAMQRDSSLQDVVLSSIRP</sequence>
<protein>
    <recommendedName>
        <fullName>Calcium and calcium/calmodulin-dependent serine/threonine-protein kinase DMI-3</fullName>
        <ecNumber>2.7.11.17</ecNumber>
    </recommendedName>
    <alternativeName>
        <fullName>CCaMK DMI3</fullName>
    </alternativeName>
    <alternativeName>
        <fullName>MtCCaMK</fullName>
    </alternativeName>
    <alternativeName>
        <fullName evidence="11">Protein DOES NOT MAKE INFECTIONS 3</fullName>
    </alternativeName>
</protein>
<proteinExistence type="evidence at protein level"/>
<gene>
    <name evidence="10" type="primary">CCAMK</name>
    <name evidence="11" type="synonym">DMI3</name>
    <name evidence="13" type="ordered locus">MTR_8g043970</name>
</gene>
<organism>
    <name type="scientific">Medicago truncatula</name>
    <name type="common">Barrel medic</name>
    <name type="synonym">Medicago tribuloides</name>
    <dbReference type="NCBI Taxonomy" id="3880"/>
    <lineage>
        <taxon>Eukaryota</taxon>
        <taxon>Viridiplantae</taxon>
        <taxon>Streptophyta</taxon>
        <taxon>Embryophyta</taxon>
        <taxon>Tracheophyta</taxon>
        <taxon>Spermatophyta</taxon>
        <taxon>Magnoliopsida</taxon>
        <taxon>eudicotyledons</taxon>
        <taxon>Gunneridae</taxon>
        <taxon>Pentapetalae</taxon>
        <taxon>rosids</taxon>
        <taxon>fabids</taxon>
        <taxon>Fabales</taxon>
        <taxon>Fabaceae</taxon>
        <taxon>Papilionoideae</taxon>
        <taxon>50 kb inversion clade</taxon>
        <taxon>NPAAA clade</taxon>
        <taxon>Hologalegina</taxon>
        <taxon>IRL clade</taxon>
        <taxon>Trifolieae</taxon>
        <taxon>Medicago</taxon>
    </lineage>
</organism>
<comment type="function">
    <text evidence="6 7 9">During nodulation, plays a central role in bacterial infection and contributes to nodule organogenesis (PubMed:22874912). Protein kinase that recognizes the calcium spiking induced by Nod factors and translates this signal to components controlling nodulation and mycorrhizal infection responses. May phosphorylate the NSP1 protein (PubMed:14963335, PubMed:15070781). Required in epidermal and cortical cells to promote infection thread (IT) formation in root hairs (PubMed:22874912).</text>
</comment>
<comment type="catalytic activity">
    <reaction>
        <text>L-seryl-[protein] + ATP = O-phospho-L-seryl-[protein] + ADP + H(+)</text>
        <dbReference type="Rhea" id="RHEA:17989"/>
        <dbReference type="Rhea" id="RHEA-COMP:9863"/>
        <dbReference type="Rhea" id="RHEA-COMP:11604"/>
        <dbReference type="ChEBI" id="CHEBI:15378"/>
        <dbReference type="ChEBI" id="CHEBI:29999"/>
        <dbReference type="ChEBI" id="CHEBI:30616"/>
        <dbReference type="ChEBI" id="CHEBI:83421"/>
        <dbReference type="ChEBI" id="CHEBI:456216"/>
        <dbReference type="EC" id="2.7.11.17"/>
    </reaction>
</comment>
<comment type="catalytic activity">
    <reaction>
        <text>L-threonyl-[protein] + ATP = O-phospho-L-threonyl-[protein] + ADP + H(+)</text>
        <dbReference type="Rhea" id="RHEA:46608"/>
        <dbReference type="Rhea" id="RHEA-COMP:11060"/>
        <dbReference type="Rhea" id="RHEA-COMP:11605"/>
        <dbReference type="ChEBI" id="CHEBI:15378"/>
        <dbReference type="ChEBI" id="CHEBI:30013"/>
        <dbReference type="ChEBI" id="CHEBI:30616"/>
        <dbReference type="ChEBI" id="CHEBI:61977"/>
        <dbReference type="ChEBI" id="CHEBI:456216"/>
        <dbReference type="EC" id="2.7.11.17"/>
    </reaction>
</comment>
<comment type="activity regulation">
    <text evidence="1">Activated by calcium. Autophosphorylation may play an important role in the regulation of the kinase activity (By similarity).</text>
</comment>
<comment type="subunit">
    <text evidence="8">Interacts with IPD3.</text>
</comment>
<comment type="subcellular location">
    <subcellularLocation>
        <location evidence="8">Nucleus</location>
    </subcellularLocation>
</comment>
<comment type="tissue specificity">
    <text evidence="8 9">Highly expressed in roots (PubMed:17722695, PubMed:22874912). Expressed in root hairs and nodules (PubMed:17722695, PubMed:22874912). Expressed at low levels in flowers. Not detected in leaves or stems (PubMed:22874912).</text>
</comment>
<comment type="developmental stage">
    <text evidence="9">In non inoculated roots, present at low levels in both epidermis and cortex. Levels increase two days after inoculation with Sinorhizobium meliloti, especially in root hair cells. During infection, mostly expressed in cortical cells where infection thread (IT) progresses and in underlying layers. Detected in the whole cortex of young nodules. In mature nodules, localized in the infection zone.</text>
</comment>
<comment type="induction">
    <text evidence="6">Small up-regulation in nodules.</text>
</comment>
<comment type="PTM">
    <text evidence="1">Autophosphorylation.</text>
</comment>
<comment type="similarity">
    <text evidence="12">Belongs to the protein kinase superfamily. CAMK Ser/Thr protein kinase family. CaMK subfamily.</text>
</comment>
<reference key="1">
    <citation type="journal article" date="2004" name="Science">
        <title>A putative Ca2+ and calmodulin-dependent protein kinase required for bacterial and fungal symbioses.</title>
        <authorList>
            <person name="Levy J."/>
            <person name="Bres C."/>
            <person name="Geurts R."/>
            <person name="Chalhoub B."/>
            <person name="Kulikova O."/>
            <person name="Duc G."/>
            <person name="Journet E.-P."/>
            <person name="Ane J.-M."/>
            <person name="Lauber E."/>
            <person name="Bisseling T."/>
            <person name="Denarie J."/>
            <person name="Rosenberg C."/>
            <person name="Debelle F."/>
        </authorList>
    </citation>
    <scope>NUCLEOTIDE SEQUENCE [GENOMIC DNA]</scope>
    <scope>FUNCTION</scope>
    <scope>TISSUE SPECIFICITY</scope>
    <scope>INDUCTION</scope>
    <source>
        <strain>cv. Jemalong A17</strain>
    </source>
</reference>
<reference key="2">
    <citation type="journal article" date="2004" name="Proc. Natl. Acad. Sci. U.S.A.">
        <title>A Ca2+/calmodulin-dependent protein kinase required for symbiotic nodule development: gene identification by transcript-based cloning.</title>
        <authorList>
            <person name="Mitra R.M."/>
            <person name="Gleason C.A."/>
            <person name="Edwards A."/>
            <person name="Hadfield J."/>
            <person name="Downie J.A."/>
            <person name="Oldroyd G.E.D."/>
            <person name="Long S.R."/>
        </authorList>
    </citation>
    <scope>NUCLEOTIDE SEQUENCE [MRNA]</scope>
    <scope>FUNCTION</scope>
    <scope>IDENTIFICATION</scope>
    <source>
        <strain>cv. Jemalong A17</strain>
    </source>
</reference>
<reference key="3">
    <citation type="journal article" date="2011" name="Nature">
        <title>The Medicago genome provides insight into the evolution of rhizobial symbioses.</title>
        <authorList>
            <person name="Young N.D."/>
            <person name="Debelle F."/>
            <person name="Oldroyd G.E.D."/>
            <person name="Geurts R."/>
            <person name="Cannon S.B."/>
            <person name="Udvardi M.K."/>
            <person name="Benedito V.A."/>
            <person name="Mayer K.F.X."/>
            <person name="Gouzy J."/>
            <person name="Schoof H."/>
            <person name="Van de Peer Y."/>
            <person name="Proost S."/>
            <person name="Cook D.R."/>
            <person name="Meyers B.C."/>
            <person name="Spannagl M."/>
            <person name="Cheung F."/>
            <person name="De Mita S."/>
            <person name="Krishnakumar V."/>
            <person name="Gundlach H."/>
            <person name="Zhou S."/>
            <person name="Mudge J."/>
            <person name="Bharti A.K."/>
            <person name="Murray J.D."/>
            <person name="Naoumkina M.A."/>
            <person name="Rosen B."/>
            <person name="Silverstein K.A.T."/>
            <person name="Tang H."/>
            <person name="Rombauts S."/>
            <person name="Zhao P.X."/>
            <person name="Zhou P."/>
            <person name="Barbe V."/>
            <person name="Bardou P."/>
            <person name="Bechner M."/>
            <person name="Bellec A."/>
            <person name="Berger A."/>
            <person name="Berges H."/>
            <person name="Bidwell S."/>
            <person name="Bisseling T."/>
            <person name="Choisne N."/>
            <person name="Couloux A."/>
            <person name="Denny R."/>
            <person name="Deshpande S."/>
            <person name="Dai X."/>
            <person name="Doyle J.J."/>
            <person name="Dudez A.-M."/>
            <person name="Farmer A.D."/>
            <person name="Fouteau S."/>
            <person name="Franken C."/>
            <person name="Gibelin C."/>
            <person name="Gish J."/>
            <person name="Goldstein S."/>
            <person name="Gonzalez A.J."/>
            <person name="Green P.J."/>
            <person name="Hallab A."/>
            <person name="Hartog M."/>
            <person name="Hua A."/>
            <person name="Humphray S.J."/>
            <person name="Jeong D.-H."/>
            <person name="Jing Y."/>
            <person name="Jocker A."/>
            <person name="Kenton S.M."/>
            <person name="Kim D.-J."/>
            <person name="Klee K."/>
            <person name="Lai H."/>
            <person name="Lang C."/>
            <person name="Lin S."/>
            <person name="Macmil S.L."/>
            <person name="Magdelenat G."/>
            <person name="Matthews L."/>
            <person name="McCorrison J."/>
            <person name="Monaghan E.L."/>
            <person name="Mun J.-H."/>
            <person name="Najar F.Z."/>
            <person name="Nicholson C."/>
            <person name="Noirot C."/>
            <person name="O'Bleness M."/>
            <person name="Paule C.R."/>
            <person name="Poulain J."/>
            <person name="Prion F."/>
            <person name="Qin B."/>
            <person name="Qu C."/>
            <person name="Retzel E.F."/>
            <person name="Riddle C."/>
            <person name="Sallet E."/>
            <person name="Samain S."/>
            <person name="Samson N."/>
            <person name="Sanders I."/>
            <person name="Saurat O."/>
            <person name="Scarpelli C."/>
            <person name="Schiex T."/>
            <person name="Segurens B."/>
            <person name="Severin A.J."/>
            <person name="Sherrier D.J."/>
            <person name="Shi R."/>
            <person name="Sims S."/>
            <person name="Singer S.R."/>
            <person name="Sinharoy S."/>
            <person name="Sterck L."/>
            <person name="Viollet A."/>
            <person name="Wang B.-B."/>
            <person name="Wang K."/>
            <person name="Wang M."/>
            <person name="Wang X."/>
            <person name="Warfsmann J."/>
            <person name="Weissenbach J."/>
            <person name="White D.D."/>
            <person name="White J.D."/>
            <person name="Wiley G.B."/>
            <person name="Wincker P."/>
            <person name="Xing Y."/>
            <person name="Yang L."/>
            <person name="Yao Z."/>
            <person name="Ying F."/>
            <person name="Zhai J."/>
            <person name="Zhou L."/>
            <person name="Zuber A."/>
            <person name="Denarie J."/>
            <person name="Dixon R.A."/>
            <person name="May G.D."/>
            <person name="Schwartz D.C."/>
            <person name="Rogers J."/>
            <person name="Quetier F."/>
            <person name="Town C.D."/>
            <person name="Roe B.A."/>
        </authorList>
    </citation>
    <scope>NUCLEOTIDE SEQUENCE [LARGE SCALE GENOMIC DNA]</scope>
    <source>
        <strain>cv. Jemalong A17</strain>
    </source>
</reference>
<reference key="4">
    <citation type="journal article" date="2014" name="BMC Genomics">
        <title>An improved genome release (version Mt4.0) for the model legume Medicago truncatula.</title>
        <authorList>
            <person name="Tang H."/>
            <person name="Krishnakumar V."/>
            <person name="Bidwell S."/>
            <person name="Rosen B."/>
            <person name="Chan A."/>
            <person name="Zhou S."/>
            <person name="Gentzbittel L."/>
            <person name="Childs K.L."/>
            <person name="Yandell M."/>
            <person name="Gundlach H."/>
            <person name="Mayer K.F."/>
            <person name="Schwartz D.C."/>
            <person name="Town C.D."/>
        </authorList>
    </citation>
    <scope>GENOME REANNOTATION</scope>
    <source>
        <strain>cv. Jemalong A17</strain>
    </source>
</reference>
<reference key="5">
    <citation type="journal article" date="2007" name="Mol. Plant Microbe Interact.">
        <title>A novel nuclear protein interacts with the symbiotic DMI3 calcium- and calmodulin-dependent protein kinase of Medicago truncatula.</title>
        <authorList>
            <person name="Messinese E."/>
            <person name="Mun J.H."/>
            <person name="Yeun L.H."/>
            <person name="Jayaraman D."/>
            <person name="Rouge P."/>
            <person name="Barre A."/>
            <person name="Lougnon G."/>
            <person name="Schornack S."/>
            <person name="Bono J.J."/>
            <person name="Cook D.R."/>
            <person name="Ane J.M."/>
        </authorList>
    </citation>
    <scope>INTERACTION WITH IPD3</scope>
    <scope>SUBCELLULAR LOCATION</scope>
    <scope>TISSUE SPECIFICITY</scope>
</reference>
<reference key="6">
    <citation type="journal article" date="2012" name="Development">
        <title>Epidermal and cortical roles of NFP and DMI3 in coordinating early steps of nodulation in Medicago truncatula.</title>
        <authorList>
            <person name="Rival P."/>
            <person name="de Billy F."/>
            <person name="Bono J.-J."/>
            <person name="Gough C."/>
            <person name="Rosenberg C."/>
            <person name="Bensmihen S."/>
        </authorList>
    </citation>
    <scope>FUNCTION</scope>
    <scope>DEVELOPMENTAL STAGE</scope>
    <scope>TISSUE SPECIFICITY</scope>
    <source>
        <strain>cv. Jemalong A17</strain>
    </source>
</reference>
<reference key="7">
    <citation type="journal article" date="2013" name="Plant Signal. Behav.">
        <title>Cell autonomous and non-cell autonomous control of rhizobial and mycorrhizal infection in Medicago truncatula.</title>
        <authorList>
            <person name="Rival P."/>
            <person name="Bono J.-J."/>
            <person name="Gough C."/>
            <person name="Bensmihen S."/>
            <person name="Rosenberg C."/>
        </authorList>
    </citation>
    <scope>REVIEW</scope>
</reference>
<evidence type="ECO:0000250" key="1"/>
<evidence type="ECO:0000250" key="2">
    <source>
        <dbReference type="UniProtKB" id="A0AAR7"/>
    </source>
</evidence>
<evidence type="ECO:0000250" key="3">
    <source>
        <dbReference type="UniProtKB" id="Q43531"/>
    </source>
</evidence>
<evidence type="ECO:0000255" key="4">
    <source>
        <dbReference type="PROSITE-ProRule" id="PRU00159"/>
    </source>
</evidence>
<evidence type="ECO:0000255" key="5">
    <source>
        <dbReference type="PROSITE-ProRule" id="PRU00448"/>
    </source>
</evidence>
<evidence type="ECO:0000269" key="6">
    <source>
    </source>
</evidence>
<evidence type="ECO:0000269" key="7">
    <source>
    </source>
</evidence>
<evidence type="ECO:0000269" key="8">
    <source>
    </source>
</evidence>
<evidence type="ECO:0000269" key="9">
    <source>
    </source>
</evidence>
<evidence type="ECO:0000303" key="10">
    <source>
    </source>
</evidence>
<evidence type="ECO:0000303" key="11">
    <source>
    </source>
</evidence>
<evidence type="ECO:0000305" key="12"/>
<evidence type="ECO:0000312" key="13">
    <source>
        <dbReference type="EMBL" id="AET02600.1"/>
    </source>
</evidence>
<dbReference type="EC" id="2.7.11.17"/>
<dbReference type="EMBL" id="AY502066">
    <property type="protein sequence ID" value="AAS55541.1"/>
    <property type="molecule type" value="Genomic_DNA"/>
</dbReference>
<dbReference type="EMBL" id="AY496049">
    <property type="protein sequence ID" value="AAS75146.1"/>
    <property type="molecule type" value="mRNA"/>
</dbReference>
<dbReference type="EMBL" id="CM001224">
    <property type="protein sequence ID" value="AET02600.1"/>
    <property type="molecule type" value="Genomic_DNA"/>
</dbReference>
<dbReference type="RefSeq" id="NP_001363154.1">
    <property type="nucleotide sequence ID" value="NM_001376225.1"/>
</dbReference>
<dbReference type="RefSeq" id="XP_003628124.1">
    <property type="nucleotide sequence ID" value="XM_003628076.2"/>
</dbReference>
<dbReference type="SMR" id="Q6RET7"/>
<dbReference type="STRING" id="3880.Q6RET7"/>
<dbReference type="PaxDb" id="3880-AET02600"/>
<dbReference type="EnsemblPlants" id="rna46630">
    <property type="protein sequence ID" value="RHN40477.1"/>
    <property type="gene ID" value="gene46630"/>
</dbReference>
<dbReference type="GeneID" id="11405240"/>
<dbReference type="Gramene" id="rna46630">
    <property type="protein sequence ID" value="RHN40477.1"/>
    <property type="gene ID" value="gene46630"/>
</dbReference>
<dbReference type="eggNOG" id="KOG0032">
    <property type="taxonomic scope" value="Eukaryota"/>
</dbReference>
<dbReference type="HOGENOM" id="CLU_000288_37_4_1"/>
<dbReference type="OMA" id="QMIMAGE"/>
<dbReference type="OrthoDB" id="40902at2759"/>
<dbReference type="BRENDA" id="2.7.11.17">
    <property type="organism ID" value="3201"/>
</dbReference>
<dbReference type="Proteomes" id="UP000002051">
    <property type="component" value="Chromosome 8"/>
</dbReference>
<dbReference type="GO" id="GO:0005737">
    <property type="term" value="C:cytoplasm"/>
    <property type="evidence" value="ECO:0000318"/>
    <property type="project" value="GO_Central"/>
</dbReference>
<dbReference type="GO" id="GO:0005634">
    <property type="term" value="C:nucleus"/>
    <property type="evidence" value="ECO:0000318"/>
    <property type="project" value="GO_Central"/>
</dbReference>
<dbReference type="GO" id="GO:0005524">
    <property type="term" value="F:ATP binding"/>
    <property type="evidence" value="ECO:0007669"/>
    <property type="project" value="UniProtKB-KW"/>
</dbReference>
<dbReference type="GO" id="GO:0005509">
    <property type="term" value="F:calcium ion binding"/>
    <property type="evidence" value="ECO:0007669"/>
    <property type="project" value="InterPro"/>
</dbReference>
<dbReference type="GO" id="GO:0009931">
    <property type="term" value="F:calcium-dependent protein serine/threonine kinase activity"/>
    <property type="evidence" value="ECO:0000318"/>
    <property type="project" value="GO_Central"/>
</dbReference>
<dbReference type="GO" id="GO:0004683">
    <property type="term" value="F:calcium/calmodulin-dependent protein kinase activity"/>
    <property type="evidence" value="ECO:0000318"/>
    <property type="project" value="GO_Central"/>
</dbReference>
<dbReference type="GO" id="GO:0005516">
    <property type="term" value="F:calmodulin binding"/>
    <property type="evidence" value="ECO:0000318"/>
    <property type="project" value="GO_Central"/>
</dbReference>
<dbReference type="GO" id="GO:0106310">
    <property type="term" value="F:protein serine kinase activity"/>
    <property type="evidence" value="ECO:0007669"/>
    <property type="project" value="RHEA"/>
</dbReference>
<dbReference type="GO" id="GO:0035556">
    <property type="term" value="P:intracellular signal transduction"/>
    <property type="evidence" value="ECO:0000318"/>
    <property type="project" value="GO_Central"/>
</dbReference>
<dbReference type="GO" id="GO:0009877">
    <property type="term" value="P:nodulation"/>
    <property type="evidence" value="ECO:0000315"/>
    <property type="project" value="UniProtKB"/>
</dbReference>
<dbReference type="CDD" id="cd00051">
    <property type="entry name" value="EFh"/>
    <property type="match status" value="1"/>
</dbReference>
<dbReference type="CDD" id="cd05117">
    <property type="entry name" value="STKc_CAMK"/>
    <property type="match status" value="1"/>
</dbReference>
<dbReference type="FunFam" id="1.10.510.10:FF:000610">
    <property type="entry name" value="Calcium and calcium/calmodulin-dependent serine/threonine-protein kinase"/>
    <property type="match status" value="1"/>
</dbReference>
<dbReference type="FunFam" id="3.30.200.20:FF:001144">
    <property type="entry name" value="Calcium and calcium/calmodulin-dependent serine/threonine-protein kinase DMI-3"/>
    <property type="match status" value="1"/>
</dbReference>
<dbReference type="FunFam" id="1.10.238.10:FF:000249">
    <property type="entry name" value="calcium and calcium/calmodulin-dependent serine/threonine-protein kinase DMI-3"/>
    <property type="match status" value="1"/>
</dbReference>
<dbReference type="Gene3D" id="1.10.238.10">
    <property type="entry name" value="EF-hand"/>
    <property type="match status" value="1"/>
</dbReference>
<dbReference type="Gene3D" id="3.30.200.20">
    <property type="entry name" value="Phosphorylase Kinase, domain 1"/>
    <property type="match status" value="1"/>
</dbReference>
<dbReference type="Gene3D" id="1.10.510.10">
    <property type="entry name" value="Transferase(Phosphotransferase) domain 1"/>
    <property type="match status" value="1"/>
</dbReference>
<dbReference type="InterPro" id="IPR050205">
    <property type="entry name" value="CDPK_Ser/Thr_kinases"/>
</dbReference>
<dbReference type="InterPro" id="IPR011992">
    <property type="entry name" value="EF-hand-dom_pair"/>
</dbReference>
<dbReference type="InterPro" id="IPR018247">
    <property type="entry name" value="EF_Hand_1_Ca_BS"/>
</dbReference>
<dbReference type="InterPro" id="IPR002048">
    <property type="entry name" value="EF_hand_dom"/>
</dbReference>
<dbReference type="InterPro" id="IPR011009">
    <property type="entry name" value="Kinase-like_dom_sf"/>
</dbReference>
<dbReference type="InterPro" id="IPR000719">
    <property type="entry name" value="Prot_kinase_dom"/>
</dbReference>
<dbReference type="InterPro" id="IPR017441">
    <property type="entry name" value="Protein_kinase_ATP_BS"/>
</dbReference>
<dbReference type="InterPro" id="IPR008271">
    <property type="entry name" value="Ser/Thr_kinase_AS"/>
</dbReference>
<dbReference type="PANTHER" id="PTHR24349">
    <property type="entry name" value="SERINE/THREONINE-PROTEIN KINASE"/>
    <property type="match status" value="1"/>
</dbReference>
<dbReference type="Pfam" id="PF13202">
    <property type="entry name" value="EF-hand_5"/>
    <property type="match status" value="1"/>
</dbReference>
<dbReference type="Pfam" id="PF13499">
    <property type="entry name" value="EF-hand_7"/>
    <property type="match status" value="1"/>
</dbReference>
<dbReference type="Pfam" id="PF00069">
    <property type="entry name" value="Pkinase"/>
    <property type="match status" value="1"/>
</dbReference>
<dbReference type="SMART" id="SM00054">
    <property type="entry name" value="EFh"/>
    <property type="match status" value="3"/>
</dbReference>
<dbReference type="SMART" id="SM00220">
    <property type="entry name" value="S_TKc"/>
    <property type="match status" value="1"/>
</dbReference>
<dbReference type="SUPFAM" id="SSF47473">
    <property type="entry name" value="EF-hand"/>
    <property type="match status" value="1"/>
</dbReference>
<dbReference type="SUPFAM" id="SSF56112">
    <property type="entry name" value="Protein kinase-like (PK-like)"/>
    <property type="match status" value="1"/>
</dbReference>
<dbReference type="PROSITE" id="PS00018">
    <property type="entry name" value="EF_HAND_1"/>
    <property type="match status" value="3"/>
</dbReference>
<dbReference type="PROSITE" id="PS50222">
    <property type="entry name" value="EF_HAND_2"/>
    <property type="match status" value="3"/>
</dbReference>
<dbReference type="PROSITE" id="PS00107">
    <property type="entry name" value="PROTEIN_KINASE_ATP"/>
    <property type="match status" value="1"/>
</dbReference>
<dbReference type="PROSITE" id="PS50011">
    <property type="entry name" value="PROTEIN_KINASE_DOM"/>
    <property type="match status" value="1"/>
</dbReference>
<dbReference type="PROSITE" id="PS00108">
    <property type="entry name" value="PROTEIN_KINASE_ST"/>
    <property type="match status" value="1"/>
</dbReference>
<accession>Q6RET7</accession>
<accession>G7L6Z2</accession>
<keyword id="KW-0067">ATP-binding</keyword>
<keyword id="KW-0106">Calcium</keyword>
<keyword id="KW-0112">Calmodulin-binding</keyword>
<keyword id="KW-0418">Kinase</keyword>
<keyword id="KW-0479">Metal-binding</keyword>
<keyword id="KW-0536">Nodulation</keyword>
<keyword id="KW-0547">Nucleotide-binding</keyword>
<keyword id="KW-0539">Nucleus</keyword>
<keyword id="KW-0597">Phosphoprotein</keyword>
<keyword id="KW-1185">Reference proteome</keyword>
<keyword id="KW-0677">Repeat</keyword>
<keyword id="KW-0723">Serine/threonine-protein kinase</keyword>
<keyword id="KW-0808">Transferase</keyword>